<reference key="1">
    <citation type="journal article" date="2004" name="Nat. Biotechnol.">
        <title>The genome sequence of the anaerobic, sulfate-reducing bacterium Desulfovibrio vulgaris Hildenborough.</title>
        <authorList>
            <person name="Heidelberg J.F."/>
            <person name="Seshadri R."/>
            <person name="Haveman S.A."/>
            <person name="Hemme C.L."/>
            <person name="Paulsen I.T."/>
            <person name="Kolonay J.F."/>
            <person name="Eisen J.A."/>
            <person name="Ward N.L."/>
            <person name="Methe B.A."/>
            <person name="Brinkac L.M."/>
            <person name="Daugherty S.C."/>
            <person name="DeBoy R.T."/>
            <person name="Dodson R.J."/>
            <person name="Durkin A.S."/>
            <person name="Madupu R."/>
            <person name="Nelson W.C."/>
            <person name="Sullivan S.A."/>
            <person name="Fouts D.E."/>
            <person name="Haft D.H."/>
            <person name="Selengut J."/>
            <person name="Peterson J.D."/>
            <person name="Davidsen T.M."/>
            <person name="Zafar N."/>
            <person name="Zhou L."/>
            <person name="Radune D."/>
            <person name="Dimitrov G."/>
            <person name="Hance M."/>
            <person name="Tran K."/>
            <person name="Khouri H.M."/>
            <person name="Gill J."/>
            <person name="Utterback T.R."/>
            <person name="Feldblyum T.V."/>
            <person name="Wall J.D."/>
            <person name="Voordouw G."/>
            <person name="Fraser C.M."/>
        </authorList>
    </citation>
    <scope>NUCLEOTIDE SEQUENCE [LARGE SCALE GENOMIC DNA]</scope>
    <source>
        <strain>ATCC 29579 / DSM 644 / CCUG 34227 / NCIMB 8303 / VKM B-1760 / Hildenborough</strain>
    </source>
</reference>
<name>MNMG_NITV2</name>
<protein>
    <recommendedName>
        <fullName evidence="1">tRNA uridine 5-carboxymethylaminomethyl modification enzyme MnmG</fullName>
    </recommendedName>
    <alternativeName>
        <fullName evidence="1">Glucose-inhibited division protein A</fullName>
    </alternativeName>
</protein>
<feature type="chain" id="PRO_0000117094" description="tRNA uridine 5-carboxymethylaminomethyl modification enzyme MnmG">
    <location>
        <begin position="1"/>
        <end position="629"/>
    </location>
</feature>
<feature type="binding site" evidence="1">
    <location>
        <begin position="19"/>
        <end position="24"/>
    </location>
    <ligand>
        <name>FAD</name>
        <dbReference type="ChEBI" id="CHEBI:57692"/>
    </ligand>
</feature>
<feature type="binding site" evidence="1">
    <location>
        <begin position="278"/>
        <end position="292"/>
    </location>
    <ligand>
        <name>NAD(+)</name>
        <dbReference type="ChEBI" id="CHEBI:57540"/>
    </ligand>
</feature>
<gene>
    <name evidence="1" type="primary">mnmG</name>
    <name evidence="1" type="synonym">gidA</name>
    <name type="ordered locus">DVU_1828</name>
</gene>
<evidence type="ECO:0000255" key="1">
    <source>
        <dbReference type="HAMAP-Rule" id="MF_00129"/>
    </source>
</evidence>
<dbReference type="EMBL" id="AE017285">
    <property type="protein sequence ID" value="AAS96305.1"/>
    <property type="molecule type" value="Genomic_DNA"/>
</dbReference>
<dbReference type="RefSeq" id="WP_010939115.1">
    <property type="nucleotide sequence ID" value="NC_002937.3"/>
</dbReference>
<dbReference type="RefSeq" id="YP_011046.1">
    <property type="nucleotide sequence ID" value="NC_002937.3"/>
</dbReference>
<dbReference type="SMR" id="Q72B11"/>
<dbReference type="STRING" id="882.DVU_1828"/>
<dbReference type="PaxDb" id="882-DVU_1828"/>
<dbReference type="EnsemblBacteria" id="AAS96305">
    <property type="protein sequence ID" value="AAS96305"/>
    <property type="gene ID" value="DVU_1828"/>
</dbReference>
<dbReference type="KEGG" id="dvu:DVU_1828"/>
<dbReference type="PATRIC" id="fig|882.5.peg.1678"/>
<dbReference type="eggNOG" id="COG0445">
    <property type="taxonomic scope" value="Bacteria"/>
</dbReference>
<dbReference type="HOGENOM" id="CLU_007831_2_2_7"/>
<dbReference type="OrthoDB" id="9815560at2"/>
<dbReference type="PhylomeDB" id="Q72B11"/>
<dbReference type="Proteomes" id="UP000002194">
    <property type="component" value="Chromosome"/>
</dbReference>
<dbReference type="GO" id="GO:0005829">
    <property type="term" value="C:cytosol"/>
    <property type="evidence" value="ECO:0007669"/>
    <property type="project" value="TreeGrafter"/>
</dbReference>
<dbReference type="GO" id="GO:0050660">
    <property type="term" value="F:flavin adenine dinucleotide binding"/>
    <property type="evidence" value="ECO:0007669"/>
    <property type="project" value="UniProtKB-UniRule"/>
</dbReference>
<dbReference type="GO" id="GO:0030488">
    <property type="term" value="P:tRNA methylation"/>
    <property type="evidence" value="ECO:0007669"/>
    <property type="project" value="TreeGrafter"/>
</dbReference>
<dbReference type="GO" id="GO:0002098">
    <property type="term" value="P:tRNA wobble uridine modification"/>
    <property type="evidence" value="ECO:0007669"/>
    <property type="project" value="InterPro"/>
</dbReference>
<dbReference type="FunFam" id="1.10.150.570:FF:000001">
    <property type="entry name" value="tRNA uridine 5-carboxymethylaminomethyl modification enzyme MnmG"/>
    <property type="match status" value="1"/>
</dbReference>
<dbReference type="FunFam" id="3.50.50.60:FF:000002">
    <property type="entry name" value="tRNA uridine 5-carboxymethylaminomethyl modification enzyme MnmG"/>
    <property type="match status" value="1"/>
</dbReference>
<dbReference type="Gene3D" id="3.50.50.60">
    <property type="entry name" value="FAD/NAD(P)-binding domain"/>
    <property type="match status" value="2"/>
</dbReference>
<dbReference type="Gene3D" id="1.10.150.570">
    <property type="entry name" value="GidA associated domain, C-terminal subdomain"/>
    <property type="match status" value="1"/>
</dbReference>
<dbReference type="Gene3D" id="1.10.10.1800">
    <property type="entry name" value="tRNA uridine 5-carboxymethylaminomethyl modification enzyme MnmG/GidA"/>
    <property type="match status" value="1"/>
</dbReference>
<dbReference type="HAMAP" id="MF_00129">
    <property type="entry name" value="MnmG_GidA"/>
    <property type="match status" value="1"/>
</dbReference>
<dbReference type="InterPro" id="IPR036188">
    <property type="entry name" value="FAD/NAD-bd_sf"/>
</dbReference>
<dbReference type="InterPro" id="IPR049312">
    <property type="entry name" value="GIDA_C_N"/>
</dbReference>
<dbReference type="InterPro" id="IPR004416">
    <property type="entry name" value="MnmG"/>
</dbReference>
<dbReference type="InterPro" id="IPR002218">
    <property type="entry name" value="MnmG-rel"/>
</dbReference>
<dbReference type="InterPro" id="IPR020595">
    <property type="entry name" value="MnmG-rel_CS"/>
</dbReference>
<dbReference type="InterPro" id="IPR026904">
    <property type="entry name" value="MnmG_C"/>
</dbReference>
<dbReference type="InterPro" id="IPR047001">
    <property type="entry name" value="MnmG_C_subdom"/>
</dbReference>
<dbReference type="InterPro" id="IPR044920">
    <property type="entry name" value="MnmG_C_subdom_sf"/>
</dbReference>
<dbReference type="InterPro" id="IPR040131">
    <property type="entry name" value="MnmG_N"/>
</dbReference>
<dbReference type="NCBIfam" id="TIGR00136">
    <property type="entry name" value="mnmG_gidA"/>
    <property type="match status" value="1"/>
</dbReference>
<dbReference type="PANTHER" id="PTHR11806">
    <property type="entry name" value="GLUCOSE INHIBITED DIVISION PROTEIN A"/>
    <property type="match status" value="1"/>
</dbReference>
<dbReference type="PANTHER" id="PTHR11806:SF0">
    <property type="entry name" value="PROTEIN MTO1 HOMOLOG, MITOCHONDRIAL"/>
    <property type="match status" value="1"/>
</dbReference>
<dbReference type="Pfam" id="PF01134">
    <property type="entry name" value="GIDA"/>
    <property type="match status" value="1"/>
</dbReference>
<dbReference type="Pfam" id="PF21680">
    <property type="entry name" value="GIDA_C_1st"/>
    <property type="match status" value="1"/>
</dbReference>
<dbReference type="Pfam" id="PF13932">
    <property type="entry name" value="SAM_GIDA_C"/>
    <property type="match status" value="1"/>
</dbReference>
<dbReference type="SMART" id="SM01228">
    <property type="entry name" value="GIDA_assoc_3"/>
    <property type="match status" value="1"/>
</dbReference>
<dbReference type="SUPFAM" id="SSF51905">
    <property type="entry name" value="FAD/NAD(P)-binding domain"/>
    <property type="match status" value="1"/>
</dbReference>
<dbReference type="PROSITE" id="PS01280">
    <property type="entry name" value="GIDA_1"/>
    <property type="match status" value="1"/>
</dbReference>
<proteinExistence type="inferred from homology"/>
<organism>
    <name type="scientific">Nitratidesulfovibrio vulgaris (strain ATCC 29579 / DSM 644 / CCUG 34227 / NCIMB 8303 / VKM B-1760 / Hildenborough)</name>
    <name type="common">Desulfovibrio vulgaris</name>
    <dbReference type="NCBI Taxonomy" id="882"/>
    <lineage>
        <taxon>Bacteria</taxon>
        <taxon>Pseudomonadati</taxon>
        <taxon>Thermodesulfobacteriota</taxon>
        <taxon>Desulfovibrionia</taxon>
        <taxon>Desulfovibrionales</taxon>
        <taxon>Desulfovibrionaceae</taxon>
        <taxon>Nitratidesulfovibrio</taxon>
    </lineage>
</organism>
<keyword id="KW-0963">Cytoplasm</keyword>
<keyword id="KW-0274">FAD</keyword>
<keyword id="KW-0285">Flavoprotein</keyword>
<keyword id="KW-0520">NAD</keyword>
<keyword id="KW-1185">Reference proteome</keyword>
<keyword id="KW-0819">tRNA processing</keyword>
<accession>Q72B11</accession>
<sequence>MSTIRKPSPPDMYDCIVVGAGHAGCEAAMALARMGHATLLLTGNADRIGHLSCNPAIGGLAKGHMVKEIDALGGMMGLWADEAGIQFRTLNSSKGPAVRATRAQIDRDAYLRVVRRDIFAQPNLRVWQDMAESIIVEEGRAAGVRTAYGQEFRAHHVLLTTGTFLQGRIHVGLSNFPGGRLGDAPATGLSASLRAIGLELGRLKTGTTPRLLRDSIDFSMMEVQPPDDPPRPFSFRGPGVRLPQLPCHVTWTNERTHEAIRAGFDRSPMFTGVIKGTGARYCPSIEDKVARFPEKERHQVFVEPEGLESPECYPNGIPTSLPLEVQKAMIATIPGLENAQIVRPGYAIEYDYADPVQLRSTLETKALRGLWLAGQINGTSGYEEAAAQGLWAALNVSCTLRSMPPFLPGRDTAYMAVLVDDLVTKGTREPYRMFTSRAEHRLLLRENNADARLTETGRALGLVDDTHWQLFSTKRAALHSLLDELENRRITPDAAARDIFSRLGEPAPTKGVSLADILRRPSLTLPDLAPFWEGVTRFADDVREEAETIVKYSGYLARQQELVARSARMEDTVLPEDMDYTVIPGLTREIVEKLGKVRPHTLGQAARISGVTPAALTCLEIQLRKMGQR</sequence>
<comment type="function">
    <text evidence="1">NAD-binding protein involved in the addition of a carboxymethylaminomethyl (cmnm) group at the wobble position (U34) of certain tRNAs, forming tRNA-cmnm(5)s(2)U34.</text>
</comment>
<comment type="cofactor">
    <cofactor evidence="1">
        <name>FAD</name>
        <dbReference type="ChEBI" id="CHEBI:57692"/>
    </cofactor>
</comment>
<comment type="subunit">
    <text evidence="1">Homodimer. Heterotetramer of two MnmE and two MnmG subunits.</text>
</comment>
<comment type="subcellular location">
    <subcellularLocation>
        <location evidence="1">Cytoplasm</location>
    </subcellularLocation>
</comment>
<comment type="similarity">
    <text evidence="1">Belongs to the MnmG family.</text>
</comment>